<dbReference type="EMBL" id="AF198100">
    <property type="protein sequence ID" value="AAF44362.1"/>
    <property type="molecule type" value="Genomic_DNA"/>
</dbReference>
<dbReference type="RefSeq" id="NP_038981.1">
    <property type="nucleotide sequence ID" value="NC_002188.1"/>
</dbReference>
<dbReference type="SMR" id="Q9J5I3"/>
<dbReference type="GeneID" id="1486737"/>
<dbReference type="KEGG" id="vg:1486737"/>
<dbReference type="Proteomes" id="UP000008597">
    <property type="component" value="Segment"/>
</dbReference>
<dbReference type="Gene3D" id="1.25.40.20">
    <property type="entry name" value="Ankyrin repeat-containing domain"/>
    <property type="match status" value="4"/>
</dbReference>
<dbReference type="InterPro" id="IPR002110">
    <property type="entry name" value="Ankyrin_rpt"/>
</dbReference>
<dbReference type="InterPro" id="IPR036770">
    <property type="entry name" value="Ankyrin_rpt-contain_sf"/>
</dbReference>
<dbReference type="InterPro" id="IPR018272">
    <property type="entry name" value="PRANC_domain"/>
</dbReference>
<dbReference type="PANTHER" id="PTHR24198">
    <property type="entry name" value="ANKYRIN REPEAT AND PROTEIN KINASE DOMAIN-CONTAINING PROTEIN"/>
    <property type="match status" value="1"/>
</dbReference>
<dbReference type="PANTHER" id="PTHR24198:SF165">
    <property type="entry name" value="ANKYRIN REPEAT-CONTAINING PROTEIN-RELATED"/>
    <property type="match status" value="1"/>
</dbReference>
<dbReference type="Pfam" id="PF12796">
    <property type="entry name" value="Ank_2"/>
    <property type="match status" value="2"/>
</dbReference>
<dbReference type="Pfam" id="PF13637">
    <property type="entry name" value="Ank_4"/>
    <property type="match status" value="2"/>
</dbReference>
<dbReference type="Pfam" id="PF09372">
    <property type="entry name" value="PRANC"/>
    <property type="match status" value="1"/>
</dbReference>
<dbReference type="SMART" id="SM00248">
    <property type="entry name" value="ANK"/>
    <property type="match status" value="12"/>
</dbReference>
<dbReference type="SUPFAM" id="SSF48403">
    <property type="entry name" value="Ankyrin repeat"/>
    <property type="match status" value="3"/>
</dbReference>
<dbReference type="PROSITE" id="PS50297">
    <property type="entry name" value="ANK_REP_REGION"/>
    <property type="match status" value="2"/>
</dbReference>
<dbReference type="PROSITE" id="PS50088">
    <property type="entry name" value="ANK_REPEAT"/>
    <property type="match status" value="6"/>
</dbReference>
<protein>
    <recommendedName>
        <fullName>Putative ankyrin repeat protein FPV018</fullName>
    </recommendedName>
</protein>
<keyword id="KW-0040">ANK repeat</keyword>
<keyword id="KW-1185">Reference proteome</keyword>
<keyword id="KW-0677">Repeat</keyword>
<sequence length="700" mass="80698">MNSYIKNHCYLCITQEKIMTLTYKYSTMDRLLSLHNILKENNVDRLRELIESDKDVINMYDSNRLLPLHIAIEHSDIEIVEMLLDNNAVINGGETIKTHPINIAMILAGGRMMLYNDNKPVKPSKRIRRLLTVNNTEKYTKIVKLLIKHGADLKMVCRSYVLDFYKGGSYCIKTGYAIGYSYFSTIPLCQILWEETKHPSLYYMRRITIKCAIRAVNIELVKHFISNNLLADTDTALEDYFLEAVKTNSPKMVKLFLDSGIDINSTICENSHTALYHAVEQENVTLVMLLLNHGADPDIGDIYSMLKYAIMSSKHGVKLFNILVKNGARIRCCNDILIEAICKRYYSIISYILSLPVNYLPISILCMCIYELRNLPITRKLLKKINDINVSCDACNMYPIHAAVSINTSRLTRLLINKGADVNVRNRYGKTPIHLACMYSKIGNIKVLIKNGANVNERDNYGITPLMICSREGKVSNMEYLLANGADVNQTDYDKNTALTYAIRNKSKECTRVLLEHGADMCFMNRFHTPITIHKTHDNPAVFLAVIYLYFSVINDSSIRNKQGFVRNMRFVNNHKETKSLKDEIENELSIMKDNVFYTGDKKISLYDVLILDKLDDLANTIKRIRRIDLKQIIIFRRFIKKHIKYMEKRNSAIESVLSIINEYTSKDHLSRWWLLSPEIHRVIVSNLSMEDLKTISGYY</sequence>
<accession>Q9J5I3</accession>
<organism>
    <name type="scientific">Fowlpox virus (strain NVSL)</name>
    <name type="common">FPV</name>
    <dbReference type="NCBI Taxonomy" id="928301"/>
    <lineage>
        <taxon>Viruses</taxon>
        <taxon>Varidnaviria</taxon>
        <taxon>Bamfordvirae</taxon>
        <taxon>Nucleocytoviricota</taxon>
        <taxon>Pokkesviricetes</taxon>
        <taxon>Chitovirales</taxon>
        <taxon>Poxviridae</taxon>
        <taxon>Chordopoxvirinae</taxon>
        <taxon>Avipoxvirus</taxon>
        <taxon>Fowlpox virus</taxon>
    </lineage>
</organism>
<name>V018_FOWPN</name>
<feature type="chain" id="PRO_0000067104" description="Putative ankyrin repeat protein FPV018">
    <location>
        <begin position="1"/>
        <end position="700"/>
    </location>
</feature>
<feature type="repeat" description="ANK 1">
    <location>
        <begin position="29"/>
        <end position="59"/>
    </location>
</feature>
<feature type="repeat" description="ANK 2">
    <location>
        <begin position="63"/>
        <end position="92"/>
    </location>
</feature>
<feature type="repeat" description="ANK 3">
    <location>
        <begin position="126"/>
        <end position="155"/>
    </location>
</feature>
<feature type="repeat" description="ANK 4">
    <location>
        <begin position="204"/>
        <end position="233"/>
    </location>
</feature>
<feature type="repeat" description="ANK 5">
    <location>
        <begin position="236"/>
        <end position="265"/>
    </location>
</feature>
<feature type="repeat" description="ANK 6">
    <location>
        <begin position="270"/>
        <end position="299"/>
    </location>
</feature>
<feature type="repeat" description="ANK 7">
    <location>
        <begin position="301"/>
        <end position="332"/>
    </location>
</feature>
<feature type="repeat" description="ANK 8">
    <location>
        <begin position="395"/>
        <end position="424"/>
    </location>
</feature>
<feature type="repeat" description="ANK 9">
    <location>
        <begin position="428"/>
        <end position="457"/>
    </location>
</feature>
<feature type="repeat" description="ANK 10">
    <location>
        <begin position="461"/>
        <end position="490"/>
    </location>
</feature>
<feature type="repeat" description="ANK 11">
    <location>
        <begin position="494"/>
        <end position="523"/>
    </location>
</feature>
<organismHost>
    <name type="scientific">Vertebrata</name>
    <dbReference type="NCBI Taxonomy" id="7742"/>
</organismHost>
<reference key="1">
    <citation type="journal article" date="2000" name="J. Virol.">
        <title>The genome of fowlpox virus.</title>
        <authorList>
            <person name="Afonso C.L."/>
            <person name="Tulman E.R."/>
            <person name="Lu Z."/>
            <person name="Zsak L."/>
            <person name="Kutish G.F."/>
            <person name="Rock D.L."/>
        </authorList>
    </citation>
    <scope>NUCLEOTIDE SEQUENCE [LARGE SCALE GENOMIC DNA]</scope>
</reference>
<gene>
    <name type="ordered locus">FPV018</name>
</gene>
<proteinExistence type="predicted"/>